<feature type="chain" id="PRO_0000099440" description="Uncoating factor OPG117">
    <location>
        <begin position="1"/>
        <end position="785"/>
    </location>
</feature>
<feature type="domain" description="SF3 helicase" evidence="2">
    <location>
        <begin position="477"/>
        <end position="639"/>
    </location>
</feature>
<feature type="region of interest" description="Primase">
    <location>
        <begin position="342"/>
        <end position="469"/>
    </location>
</feature>
<feature type="active site" evidence="1">
    <location>
        <position position="170"/>
    </location>
</feature>
<feature type="binding site" evidence="2">
    <location>
        <begin position="503"/>
        <end position="510"/>
    </location>
    <ligand>
        <name>ATP</name>
        <dbReference type="ChEBI" id="CHEBI:30616"/>
    </ligand>
</feature>
<feature type="mutagenesis site" description="Loss of primase activity." evidence="5 6">
    <original>D</original>
    <variation>A</variation>
    <location>
        <position position="170"/>
    </location>
</feature>
<feature type="mutagenesis site" description="Loss of NTPase activity, no effect on primase activity." evidence="5">
    <original>G</original>
    <variation>A</variation>
    <location>
        <position position="503"/>
    </location>
</feature>
<feature type="mutagenesis site" description="About 30% loss of ATP binding, and more than 90% loss of ATPase activity." evidence="4">
    <original>K</original>
    <variation>A</variation>
    <location>
        <position position="509"/>
    </location>
</feature>
<feature type="mutagenesis site" description="More than 90% loss of ATPase activity." evidence="4">
    <original>E</original>
    <variation>Q</variation>
    <location>
        <position position="557"/>
    </location>
</feature>
<feature type="mutagenesis site" description="More than 90% loss of ATPase activity." evidence="4 6">
    <original>N</original>
    <variation>D</variation>
    <location>
        <position position="605"/>
    </location>
</feature>
<feature type="mutagenesis site" description="More than 90% loss of ATPase activity; when associated with A-620." evidence="4">
    <original>R</original>
    <variation>A</variation>
    <location>
        <position position="619"/>
    </location>
</feature>
<feature type="mutagenesis site" description="More than 90% loss of ATPase activity; when associated with A-619." evidence="4">
    <original>R</original>
    <variation>A</variation>
    <location>
        <position position="620"/>
    </location>
</feature>
<feature type="strand" evidence="9">
    <location>
        <begin position="11"/>
        <end position="18"/>
    </location>
</feature>
<feature type="helix" evidence="9">
    <location>
        <begin position="21"/>
        <end position="26"/>
    </location>
</feature>
<feature type="turn" evidence="9">
    <location>
        <begin position="29"/>
        <end position="31"/>
    </location>
</feature>
<feature type="strand" evidence="9">
    <location>
        <begin position="32"/>
        <end position="35"/>
    </location>
</feature>
<feature type="helix" evidence="9">
    <location>
        <begin position="37"/>
        <end position="46"/>
    </location>
</feature>
<feature type="strand" evidence="9">
    <location>
        <begin position="53"/>
        <end position="55"/>
    </location>
</feature>
<feature type="turn" evidence="9">
    <location>
        <begin position="59"/>
        <end position="61"/>
    </location>
</feature>
<feature type="strand" evidence="9">
    <location>
        <begin position="64"/>
        <end position="73"/>
    </location>
</feature>
<feature type="helix" evidence="9">
    <location>
        <begin position="79"/>
        <end position="104"/>
    </location>
</feature>
<feature type="helix" evidence="9">
    <location>
        <begin position="109"/>
        <end position="118"/>
    </location>
</feature>
<feature type="strand" evidence="9">
    <location>
        <begin position="120"/>
        <end position="122"/>
    </location>
</feature>
<feature type="strand" evidence="9">
    <location>
        <begin position="124"/>
        <end position="126"/>
    </location>
</feature>
<feature type="strand" evidence="9">
    <location>
        <begin position="130"/>
        <end position="143"/>
    </location>
</feature>
<feature type="helix" evidence="9">
    <location>
        <begin position="144"/>
        <end position="160"/>
    </location>
</feature>
<feature type="helix" evidence="9">
    <location>
        <begin position="166"/>
        <end position="168"/>
    </location>
</feature>
<feature type="helix" evidence="9">
    <location>
        <begin position="171"/>
        <end position="173"/>
    </location>
</feature>
<feature type="helix" evidence="9">
    <location>
        <begin position="204"/>
        <end position="207"/>
    </location>
</feature>
<evidence type="ECO:0000255" key="1"/>
<evidence type="ECO:0000255" key="2">
    <source>
        <dbReference type="PROSITE-ProRule" id="PRU00551"/>
    </source>
</evidence>
<evidence type="ECO:0000269" key="3">
    <source>
    </source>
</evidence>
<evidence type="ECO:0000269" key="4">
    <source>
    </source>
</evidence>
<evidence type="ECO:0000269" key="5">
    <source>
    </source>
</evidence>
<evidence type="ECO:0000269" key="6">
    <source>
    </source>
</evidence>
<evidence type="ECO:0000269" key="7">
    <source>
    </source>
</evidence>
<evidence type="ECO:0000305" key="8"/>
<evidence type="ECO:0007829" key="9">
    <source>
        <dbReference type="PDB" id="8XIF"/>
    </source>
</evidence>
<gene>
    <name type="primary">OPG117</name>
    <name type="ordered locus">VACWR110</name>
    <name type="ORF">D5R</name>
</gene>
<organismHost>
    <name type="scientific">Bos taurus</name>
    <name type="common">Bovine</name>
    <dbReference type="NCBI Taxonomy" id="9913"/>
</organismHost>
<comment type="function">
    <text evidence="3 4 5 6 7">Multifunctional protein required for genome uncoating and replication (PubMed:17093187, PubMed:18000036, PubMed:26912611). Major viral uncoating protein that is required for the release of the viral genome from incoming viral cores containing the viral DNA genome (PubMed:24439902). Possesses an ATPase activity that is required for hexamerization and uncoating (PubMed:24439902, PubMed:26912611).</text>
</comment>
<comment type="subunit">
    <text evidence="3 4 7">Homomultimer; hexamer (PubMed:17093187, PubMed:26912611). Interacts with OPG148 (PubMed:12490386).</text>
</comment>
<comment type="subcellular location">
    <subcellularLocation>
        <location evidence="6">Host cytoplasm</location>
    </subcellularLocation>
    <text evidence="6">Colocalizes with free cytoplasmic cores containing the viral DNA genome.</text>
</comment>
<comment type="similarity">
    <text evidence="8">Belongs to the orthopoxvirus OPG117 family.</text>
</comment>
<protein>
    <recommendedName>
        <fullName>Uncoating factor OPG117</fullName>
        <ecNumber evidence="4">3.6.4.-</ecNumber>
    </recommendedName>
</protein>
<keyword id="KW-0002">3D-structure</keyword>
<keyword id="KW-0067">ATP-binding</keyword>
<keyword id="KW-0347">Helicase</keyword>
<keyword id="KW-1035">Host cytoplasm</keyword>
<keyword id="KW-0378">Hydrolase</keyword>
<keyword id="KW-0547">Nucleotide-binding</keyword>
<keyword id="KW-1185">Reference proteome</keyword>
<organism>
    <name type="scientific">Vaccinia virus (strain Western Reserve)</name>
    <name type="common">VACV</name>
    <name type="synonym">Vaccinia virus (strain WR)</name>
    <dbReference type="NCBI Taxonomy" id="10254"/>
    <lineage>
        <taxon>Viruses</taxon>
        <taxon>Varidnaviria</taxon>
        <taxon>Bamfordvirae</taxon>
        <taxon>Nucleocytoviricota</taxon>
        <taxon>Pokkesviricetes</taxon>
        <taxon>Chitovirales</taxon>
        <taxon>Poxviridae</taxon>
        <taxon>Chordopoxvirinae</taxon>
        <taxon>Orthopoxvirus</taxon>
        <taxon>Vaccinia virus</taxon>
    </lineage>
</organism>
<dbReference type="EC" id="3.6.4.-" evidence="4"/>
<dbReference type="EMBL" id="M15058">
    <property type="protein sequence ID" value="AAA48259.1"/>
    <property type="molecule type" value="Genomic_DNA"/>
</dbReference>
<dbReference type="EMBL" id="M16021">
    <property type="protein sequence ID" value="AAA69629.1"/>
    <property type="molecule type" value="Genomic_DNA"/>
</dbReference>
<dbReference type="EMBL" id="AY243312">
    <property type="protein sequence ID" value="AAO89389.1"/>
    <property type="molecule type" value="Genomic_DNA"/>
</dbReference>
<dbReference type="PIR" id="B93025">
    <property type="entry name" value="QQVZ8"/>
</dbReference>
<dbReference type="RefSeq" id="YP_232992.1">
    <property type="nucleotide sequence ID" value="NC_006998.1"/>
</dbReference>
<dbReference type="PDB" id="8XIF">
    <property type="method" value="X-ray"/>
    <property type="resolution" value="1.39 A"/>
    <property type="chains" value="A=1-224"/>
</dbReference>
<dbReference type="PDBsum" id="8XIF"/>
<dbReference type="SMR" id="P04305"/>
<dbReference type="DIP" id="DIP-2181N"/>
<dbReference type="IntAct" id="P04305">
    <property type="interactions" value="1"/>
</dbReference>
<dbReference type="MINT" id="P04305"/>
<dbReference type="GeneID" id="3707566"/>
<dbReference type="KEGG" id="vg:3707566"/>
<dbReference type="Proteomes" id="UP000000344">
    <property type="component" value="Genome"/>
</dbReference>
<dbReference type="GO" id="GO:0030430">
    <property type="term" value="C:host cell cytoplasm"/>
    <property type="evidence" value="ECO:0007669"/>
    <property type="project" value="UniProtKB-SubCell"/>
</dbReference>
<dbReference type="GO" id="GO:0005524">
    <property type="term" value="F:ATP binding"/>
    <property type="evidence" value="ECO:0007669"/>
    <property type="project" value="UniProtKB-KW"/>
</dbReference>
<dbReference type="GO" id="GO:0003899">
    <property type="term" value="F:DNA-directed RNA polymerase activity"/>
    <property type="evidence" value="ECO:0000314"/>
    <property type="project" value="UniProtKB"/>
</dbReference>
<dbReference type="GO" id="GO:0004386">
    <property type="term" value="F:helicase activity"/>
    <property type="evidence" value="ECO:0007669"/>
    <property type="project" value="UniProtKB-KW"/>
</dbReference>
<dbReference type="GO" id="GO:0017111">
    <property type="term" value="F:ribonucleoside triphosphate phosphatase activity"/>
    <property type="evidence" value="ECO:0000314"/>
    <property type="project" value="UniProtKB"/>
</dbReference>
<dbReference type="GO" id="GO:0006269">
    <property type="term" value="P:DNA replication, synthesis of primer"/>
    <property type="evidence" value="ECO:0000314"/>
    <property type="project" value="UniProtKB"/>
</dbReference>
<dbReference type="GO" id="GO:0039693">
    <property type="term" value="P:viral DNA genome replication"/>
    <property type="evidence" value="ECO:0000314"/>
    <property type="project" value="UniProtKB"/>
</dbReference>
<dbReference type="Gene3D" id="3.40.50.300">
    <property type="entry name" value="P-loop containing nucleotide triphosphate hydrolases"/>
    <property type="match status" value="1"/>
</dbReference>
<dbReference type="InterPro" id="IPR004968">
    <property type="entry name" value="DNA_primase/NTPase_C"/>
</dbReference>
<dbReference type="InterPro" id="IPR014015">
    <property type="entry name" value="Helicase_SF3_DNA-vir"/>
</dbReference>
<dbReference type="InterPro" id="IPR027417">
    <property type="entry name" value="P-loop_NTPase"/>
</dbReference>
<dbReference type="InterPro" id="IPR014818">
    <property type="entry name" value="Phage/plasmid_primase_P4_C"/>
</dbReference>
<dbReference type="InterPro" id="IPR051620">
    <property type="entry name" value="Viral_Helicase-Primase_Cplx"/>
</dbReference>
<dbReference type="PANTHER" id="PTHR35372">
    <property type="entry name" value="ATP BINDING PROTEIN-RELATED"/>
    <property type="match status" value="1"/>
</dbReference>
<dbReference type="PANTHER" id="PTHR35372:SF2">
    <property type="entry name" value="SF3 HELICASE DOMAIN-CONTAINING PROTEIN"/>
    <property type="match status" value="1"/>
</dbReference>
<dbReference type="Pfam" id="PF08706">
    <property type="entry name" value="D5_N"/>
    <property type="match status" value="1"/>
</dbReference>
<dbReference type="Pfam" id="PF03288">
    <property type="entry name" value="Pox_D5"/>
    <property type="match status" value="1"/>
</dbReference>
<dbReference type="PROSITE" id="PS51206">
    <property type="entry name" value="SF3_HELICASE_1"/>
    <property type="match status" value="1"/>
</dbReference>
<proteinExistence type="evidence at protein level"/>
<accession>P04305</accession>
<accession>Q76ZS2</accession>
<sequence>MDAAIRGNDVIFVLKTIGVPSACRQNEDPRFVEAFKCDELERYIENNPECTLFESLRDEEAYSIVRIFMDVDLDACLDEIDYLTAIQDFIIEVSNCVARFAFTECGAIHENVIKSMRSNFSLTKSTNRDKTSFHIIFLDTYTTMDTLIAMKRTLLELSRSSENPLTRSIDTAVYRRKTTLRVVGTRKNPNCDTIHVMQPPHDNIEDYLFTYVDMNNNSYYFSLQQRLEDLVPDKLWEPGFISFEDAIKRVSKIFINSIINFNDLDENNFTTVPLVIDYVTPCALCKKRSHKHPHQLSLENGAIRIYKTGNPHSCKVKIVPLDGNKLFNIAQRILDTNSVLLTERGDHIVWINNSWKFNSEEPLITKLILSIRHQLPKEYSSELLCPRKRKTVEANIRDMLVDSVETDTYPDKLPFKNGVLDLVDGMFYSGDDAKKYTCTVSTGFKFDDTKFVEDSPEMEELMNIINDIQPLTDENKKNRELYEKTLSSCLCGATKGCLTFFFGETATGKSTTKRLLKSAIGDLFVETGQTILTDVLDKGPNPFIANMHLKRSVFCSELPDFACSGSKKIRSDNIKKLTEPCVIGRPCFSNKINNRNHATIIIDTNYKPVFDRIDNALMRRIAVVRFRTHFSQPSGREAAENNDAYDKVKLLDEGLDGKIQNNRYRFAFLYLLVKWYRKYHVPIMKLYPTPEEIPDFAFYLKIGTLLVSSSVKHIPLMTDLSKKGYILYDNVVTLPLTTFQQKISKYFNSRLFGHDIESFINRHKKFANVSDEYLQYIFIEDISSP</sequence>
<reference key="1">
    <citation type="journal article" date="1986" name="Virology">
        <title>Nucleotide sequence and genetic map of the 16-kb vaccinia virus HindIII D fragment.</title>
        <authorList>
            <person name="Niles E.G."/>
            <person name="Condit R.C."/>
            <person name="Caro P."/>
            <person name="Davidson K."/>
            <person name="Matusick L."/>
            <person name="Seto J."/>
        </authorList>
    </citation>
    <scope>NUCLEOTIDE SEQUENCE [GENOMIC DNA]</scope>
</reference>
<reference key="2">
    <citation type="journal article" date="1987" name="J. Virol.">
        <title>Nucleotide sequence and transcript organization of a region of the vaccinia virus genome which encodes a constitutively expressed gene required for DNA replication.</title>
        <authorList>
            <person name="Roseman N.A."/>
            <person name="Hruby D.E."/>
        </authorList>
    </citation>
    <scope>NUCLEOTIDE SEQUENCE [GENOMIC DNA]</scope>
</reference>
<reference key="3">
    <citation type="submission" date="2003-02" db="EMBL/GenBank/DDBJ databases">
        <title>Sequencing of the coding region of Vaccinia-WR to an average 9-fold redundancy and an error rate of 0.16/10kb.</title>
        <authorList>
            <person name="Esposito J.J."/>
            <person name="Frace A.M."/>
            <person name="Sammons S.A."/>
            <person name="Olsen-Rasmussen M."/>
            <person name="Osborne J."/>
            <person name="Wohlhueter R."/>
        </authorList>
    </citation>
    <scope>NUCLEOTIDE SEQUENCE [LARGE SCALE GENOMIC DNA]</scope>
</reference>
<reference key="4">
    <citation type="journal article" date="2002" name="Virology">
        <title>Mapping interaction sites of the A20R protein component of the vaccinia virus DNA replication complex.</title>
        <authorList>
            <person name="Ishii K."/>
            <person name="Moss B."/>
        </authorList>
    </citation>
    <scope>INTERACTION WITH OPG148</scope>
</reference>
<reference key="5">
    <citation type="journal article" date="2007" name="Proc. Natl. Acad. Sci. U.S.A.">
        <title>Poxvirus DNA primase.</title>
        <authorList>
            <person name="De Silva F.S."/>
            <person name="Lewis W."/>
            <person name="Berglund P."/>
            <person name="Koonin E.V."/>
            <person name="Moss B."/>
        </authorList>
    </citation>
    <scope>FUNCTION</scope>
    <scope>MUTAGENESIS OF ASP-170 AND GLY-503</scope>
</reference>
<reference key="6">
    <citation type="journal article" date="2007" name="J. Virol.">
        <title>Biochemical and genetic analysis of the vaccinia virus d5 protein: Multimerization-dependent ATPase activity is required to support viral DNA replication.</title>
        <authorList>
            <person name="Boyle K.A."/>
            <person name="Arps L."/>
            <person name="Traktman P."/>
        </authorList>
    </citation>
    <scope>FUNCTION</scope>
    <scope>SUBUNIT</scope>
    <scope>CATALYTIC ACTIVITY</scope>
    <scope>MUTAGENESIS OF LYS-509; GLU-557; ASN-605; ARG-619 AND ARG-620</scope>
</reference>
<reference key="7">
    <citation type="journal article" date="2014" name="Cell Host Microbe">
        <title>siRNA screen of early poxvirus genes identifies the AAA+ ATPase D5 as the virus genome-uncoating factor.</title>
        <authorList>
            <person name="Kilcher S."/>
            <person name="Schmidt F.I."/>
            <person name="Schneider C."/>
            <person name="Kopf M."/>
            <person name="Helenius A."/>
            <person name="Mercer J."/>
        </authorList>
    </citation>
    <scope>FUNCTION</scope>
    <scope>MUTAGENESIS OF ASP-170 AND ASN-605</scope>
    <scope>SUBCELLULAR LOCATION</scope>
</reference>
<reference key="8">
    <citation type="journal article" date="2016" name="J. Virol.">
        <title>Domain Organization of Vaccinia Virus Helicase-Primase D5.</title>
        <authorList>
            <person name="Hutin S."/>
            <person name="Ling W.L."/>
            <person name="Round A."/>
            <person name="Effantin G."/>
            <person name="Reich S."/>
            <person name="Iseni F."/>
            <person name="Tarbouriech N."/>
            <person name="Schoehn G."/>
            <person name="Burmeister W.P."/>
        </authorList>
    </citation>
    <scope>FUNCTION</scope>
    <scope>SUBUNIT</scope>
</reference>
<name>PG117_VACCW</name>